<sequence length="869" mass="98686">MIDVISRYQASPLIESTLGYQSITIIFGNAHLQSSKKNVILAAMMRTRIPGLVPRICQTPLPWKPPTQLTRVRYARWSTSHAVSWFETGHIDLKENEGLLFINNIFPSKLQWLLRGPLGGMRSYEEAVKRIDRPQLAASDTFQIIQRVVPKNLNIQVKEVVPRFREGGAFVKYTRPSNVNDADIEASIKENLKEHPIRPWFNPFQEVQVCRVIGRPWIEDLYRLPSPRLKVAFHPVSPEASAADLNTETLYTLFRPYGKIRDIEKQPSDSKVTPRYAFVEFSRPKYAGMAKNCMHGFTVPEQEGGGKSGTRLKIKYERKIKLSMIKDWLLSHPRIVIPVLAALLAAITVTIFDPMRTFFIKLKIKSTLQTEENGVMQWIRKQVNKANIIYFGRKGADPRGLTAIWEDRQEDITRLQSWLMENVETFIVVHGPRGSGKRELVLDRALVDYKYKIVIDCKQIQDARGDSAKIARAASQVGYRPVFSWMNSISSFIDLAAQGMIGTKAGFSETLDAQLSNIWQNTATALKKVTLEHRKKNHKDSHLTDEEYLEAHPELRPVVVIDNYLHNASESSVVYDKITEWAAGLTAGNIAHVIFLTTDVSYAKPLSKALPNSVFRTITLGDCSLEVGRKFVVNHLAYESKDGKTQPRRAEELEDLDACIETLGGRVTDLEFMAHRIEAGETPRGAVNRIIEQSASEILKMFLLTPETIEQSWTHEQAWYLIKRLAESKDGALSYNEIVLSELFKENGEITLRALEHAELISIAAVNGCPQTIRPGKPVLRAAFKKVTENKALSSRMDLAIITQKINKENKSIGKYEEELSLLGSLPRQPRELTDRIQWVLNKVYSSQNKIAKYEKESAYLQKILRSEH</sequence>
<keyword id="KW-0472">Membrane</keyword>
<keyword id="KW-0496">Mitochondrion</keyword>
<keyword id="KW-0999">Mitochondrion inner membrane</keyword>
<keyword id="KW-0507">mRNA processing</keyword>
<keyword id="KW-1185">Reference proteome</keyword>
<keyword id="KW-0694">RNA-binding</keyword>
<keyword id="KW-0809">Transit peptide</keyword>
<keyword id="KW-0812">Transmembrane</keyword>
<keyword id="KW-1133">Transmembrane helix</keyword>
<accession>A1D3P4</accession>
<dbReference type="EMBL" id="DS027688">
    <property type="protein sequence ID" value="EAW23037.1"/>
    <property type="status" value="ALT_FRAME"/>
    <property type="molecule type" value="Genomic_DNA"/>
</dbReference>
<dbReference type="RefSeq" id="XP_001264934.1">
    <property type="nucleotide sequence ID" value="XM_001264933.1"/>
</dbReference>
<dbReference type="EnsemblFungi" id="EAW23037">
    <property type="protein sequence ID" value="EAW23037"/>
    <property type="gene ID" value="NFIA_017380"/>
</dbReference>
<dbReference type="GeneID" id="4591789"/>
<dbReference type="KEGG" id="nfi:NFIA_017380"/>
<dbReference type="VEuPathDB" id="FungiDB:NFIA_017380"/>
<dbReference type="eggNOG" id="ENOG502QS0P">
    <property type="taxonomic scope" value="Eukaryota"/>
</dbReference>
<dbReference type="OrthoDB" id="10267654at2759"/>
<dbReference type="Proteomes" id="UP000006702">
    <property type="component" value="Unassembled WGS sequence"/>
</dbReference>
<dbReference type="GO" id="GO:0005743">
    <property type="term" value="C:mitochondrial inner membrane"/>
    <property type="evidence" value="ECO:0007669"/>
    <property type="project" value="UniProtKB-SubCell"/>
</dbReference>
<dbReference type="GO" id="GO:0003723">
    <property type="term" value="F:RNA binding"/>
    <property type="evidence" value="ECO:0007669"/>
    <property type="project" value="UniProtKB-KW"/>
</dbReference>
<dbReference type="GO" id="GO:0000002">
    <property type="term" value="P:mitochondrial genome maintenance"/>
    <property type="evidence" value="ECO:0007669"/>
    <property type="project" value="InterPro"/>
</dbReference>
<dbReference type="GO" id="GO:0006397">
    <property type="term" value="P:mRNA processing"/>
    <property type="evidence" value="ECO:0007669"/>
    <property type="project" value="UniProtKB-KW"/>
</dbReference>
<dbReference type="FunFam" id="3.30.70.330:FF:000959">
    <property type="entry name" value="Mitochondrial escape protein 2"/>
    <property type="match status" value="1"/>
</dbReference>
<dbReference type="Gene3D" id="3.30.70.330">
    <property type="match status" value="1"/>
</dbReference>
<dbReference type="InterPro" id="IPR018850">
    <property type="entry name" value="Mt_escape_2_C"/>
</dbReference>
<dbReference type="InterPro" id="IPR012677">
    <property type="entry name" value="Nucleotide-bd_a/b_plait_sf"/>
</dbReference>
<dbReference type="InterPro" id="IPR035979">
    <property type="entry name" value="RBD_domain_sf"/>
</dbReference>
<dbReference type="InterPro" id="IPR000504">
    <property type="entry name" value="RRM_dom"/>
</dbReference>
<dbReference type="InterPro" id="IPR039627">
    <property type="entry name" value="Yme2_C"/>
</dbReference>
<dbReference type="PANTHER" id="PTHR32198">
    <property type="entry name" value="MITOCHONDRIAL ESCAPE PROTEIN 2"/>
    <property type="match status" value="1"/>
</dbReference>
<dbReference type="PANTHER" id="PTHR32198:SF2">
    <property type="entry name" value="MITOCHONDRIAL ESCAPE PROTEIN 2"/>
    <property type="match status" value="1"/>
</dbReference>
<dbReference type="Pfam" id="PF10443">
    <property type="entry name" value="RNA12"/>
    <property type="match status" value="1"/>
</dbReference>
<dbReference type="Pfam" id="PF00076">
    <property type="entry name" value="RRM_1"/>
    <property type="match status" value="1"/>
</dbReference>
<dbReference type="SUPFAM" id="SSF54928">
    <property type="entry name" value="RNA-binding domain, RBD"/>
    <property type="match status" value="1"/>
</dbReference>
<dbReference type="PROSITE" id="PS50102">
    <property type="entry name" value="RRM"/>
    <property type="match status" value="1"/>
</dbReference>
<gene>
    <name type="primary">yme2</name>
    <name type="ORF">NFIA_017380</name>
</gene>
<organism>
    <name type="scientific">Neosartorya fischeri (strain ATCC 1020 / DSM 3700 / CBS 544.65 / FGSC A1164 / JCM 1740 / NRRL 181 / WB 181)</name>
    <name type="common">Aspergillus fischerianus</name>
    <dbReference type="NCBI Taxonomy" id="331117"/>
    <lineage>
        <taxon>Eukaryota</taxon>
        <taxon>Fungi</taxon>
        <taxon>Dikarya</taxon>
        <taxon>Ascomycota</taxon>
        <taxon>Pezizomycotina</taxon>
        <taxon>Eurotiomycetes</taxon>
        <taxon>Eurotiomycetidae</taxon>
        <taxon>Eurotiales</taxon>
        <taxon>Aspergillaceae</taxon>
        <taxon>Aspergillus</taxon>
        <taxon>Aspergillus subgen. Fumigati</taxon>
    </lineage>
</organism>
<feature type="transit peptide" description="Mitochondrion" evidence="2">
    <location>
        <begin position="1"/>
        <end status="unknown"/>
    </location>
</feature>
<feature type="chain" id="PRO_0000343126" description="Mitochondrial escape protein 2">
    <location>
        <begin status="unknown"/>
        <end position="869"/>
    </location>
</feature>
<feature type="topological domain" description="Mitochondrial matrix" evidence="2">
    <location>
        <begin status="unknown"/>
        <end position="334"/>
    </location>
</feature>
<feature type="transmembrane region" description="Helical" evidence="2">
    <location>
        <begin position="335"/>
        <end position="355"/>
    </location>
</feature>
<feature type="topological domain" description="Mitochondrial intermembrane" evidence="2">
    <location>
        <begin position="356"/>
        <end position="869"/>
    </location>
</feature>
<feature type="domain" description="RRM" evidence="3">
    <location>
        <begin position="227"/>
        <end position="319"/>
    </location>
</feature>
<reference key="1">
    <citation type="journal article" date="2008" name="PLoS Genet.">
        <title>Genomic islands in the pathogenic filamentous fungus Aspergillus fumigatus.</title>
        <authorList>
            <person name="Fedorova N.D."/>
            <person name="Khaldi N."/>
            <person name="Joardar V.S."/>
            <person name="Maiti R."/>
            <person name="Amedeo P."/>
            <person name="Anderson M.J."/>
            <person name="Crabtree J."/>
            <person name="Silva J.C."/>
            <person name="Badger J.H."/>
            <person name="Albarraq A."/>
            <person name="Angiuoli S."/>
            <person name="Bussey H."/>
            <person name="Bowyer P."/>
            <person name="Cotty P.J."/>
            <person name="Dyer P.S."/>
            <person name="Egan A."/>
            <person name="Galens K."/>
            <person name="Fraser-Liggett C.M."/>
            <person name="Haas B.J."/>
            <person name="Inman J.M."/>
            <person name="Kent R."/>
            <person name="Lemieux S."/>
            <person name="Malavazi I."/>
            <person name="Orvis J."/>
            <person name="Roemer T."/>
            <person name="Ronning C.M."/>
            <person name="Sundaram J.P."/>
            <person name="Sutton G."/>
            <person name="Turner G."/>
            <person name="Venter J.C."/>
            <person name="White O.R."/>
            <person name="Whitty B.R."/>
            <person name="Youngman P."/>
            <person name="Wolfe K.H."/>
            <person name="Goldman G.H."/>
            <person name="Wortman J.R."/>
            <person name="Jiang B."/>
            <person name="Denning D.W."/>
            <person name="Nierman W.C."/>
        </authorList>
    </citation>
    <scope>NUCLEOTIDE SEQUENCE [LARGE SCALE GENOMIC DNA]</scope>
    <source>
        <strain>ATCC 1020 / DSM 3700 / CBS 544.65 / FGSC A1164 / JCM 1740 / NRRL 181 / WB 181</strain>
    </source>
</reference>
<protein>
    <recommendedName>
        <fullName>Mitochondrial escape protein 2</fullName>
    </recommendedName>
</protein>
<name>YME2_NEOFI</name>
<comment type="function">
    <text evidence="1">Plays a role in maintaining the mitochondrial genome and in controlling the mtDNA escape. Involved in the regulation of mtDNA nucleotide structure and number. May have a dispensable role in early maturation of pre-rRNA (By similarity).</text>
</comment>
<comment type="subcellular location">
    <subcellularLocation>
        <location evidence="1">Mitochondrion inner membrane</location>
        <topology evidence="1">Single-pass membrane protein</topology>
    </subcellularLocation>
</comment>
<comment type="similarity">
    <text evidence="4">Belongs to the YME2 family.</text>
</comment>
<comment type="sequence caution" evidence="4">
    <conflict type="frameshift">
        <sequence resource="EMBL-CDS" id="EAW23037"/>
    </conflict>
</comment>
<proteinExistence type="inferred from homology"/>
<evidence type="ECO:0000250" key="1"/>
<evidence type="ECO:0000255" key="2"/>
<evidence type="ECO:0000255" key="3">
    <source>
        <dbReference type="PROSITE-ProRule" id="PRU00176"/>
    </source>
</evidence>
<evidence type="ECO:0000305" key="4"/>